<protein>
    <recommendedName>
        <fullName evidence="5">Late embryogenesis abundant protein 3</fullName>
        <shortName evidence="5">LEA 3</shortName>
    </recommendedName>
</protein>
<comment type="function">
    <text evidence="6">LEA proteins are late embryonic proteins abundant in higher plant seed embryos. The function of those proteins is not known.</text>
</comment>
<comment type="subcellular location">
    <subcellularLocation>
        <location evidence="4">Cytoplasm</location>
    </subcellularLocation>
    <subcellularLocation>
        <location evidence="4">Nucleus</location>
    </subcellularLocation>
</comment>
<comment type="similarity">
    <text evidence="6">Belongs to the LEA type SMP family.</text>
</comment>
<organism evidence="8">
    <name type="scientific">Arabidopsis thaliana</name>
    <name type="common">Mouse-ear cress</name>
    <dbReference type="NCBI Taxonomy" id="3702"/>
    <lineage>
        <taxon>Eukaryota</taxon>
        <taxon>Viridiplantae</taxon>
        <taxon>Streptophyta</taxon>
        <taxon>Embryophyta</taxon>
        <taxon>Tracheophyta</taxon>
        <taxon>Spermatophyta</taxon>
        <taxon>Magnoliopsida</taxon>
        <taxon>eudicotyledons</taxon>
        <taxon>Gunneridae</taxon>
        <taxon>Pentapetalae</taxon>
        <taxon>rosids</taxon>
        <taxon>malvids</taxon>
        <taxon>Brassicales</taxon>
        <taxon>Brassicaceae</taxon>
        <taxon>Camelineae</taxon>
        <taxon>Arabidopsis</taxon>
    </lineage>
</organism>
<sequence>MAQHQHSPQRPRDQDNTRPHDQYGIVFSVSGDDVARKQGDSFSQPDPTVATMGSVDTVTIGEALEATALSLGDKPVDRRDAAAIQAAETRATGESKGRPGGLAVAAQAAATTNEQTVSEEDKVNIADILTDAAERLPGDKVVTSEDAEAVVGAELRSSSEMKTTPGGVADSMSAGARLNQQL</sequence>
<evidence type="ECO:0000250" key="1">
    <source>
        <dbReference type="UniProtKB" id="Q9LJ97"/>
    </source>
</evidence>
<evidence type="ECO:0000255" key="2"/>
<evidence type="ECO:0000256" key="3">
    <source>
        <dbReference type="SAM" id="MobiDB-lite"/>
    </source>
</evidence>
<evidence type="ECO:0000269" key="4">
    <source>
    </source>
</evidence>
<evidence type="ECO:0000303" key="5">
    <source>
    </source>
</evidence>
<evidence type="ECO:0000305" key="6"/>
<evidence type="ECO:0000312" key="7">
    <source>
        <dbReference type="Araport" id="AT1G03120"/>
    </source>
</evidence>
<evidence type="ECO:0000312" key="8">
    <source>
        <dbReference type="EMBL" id="AAD25796.1"/>
    </source>
</evidence>
<feature type="chain" id="PRO_0000436058" description="Late embryogenesis abundant protein 3">
    <location>
        <begin position="1"/>
        <end position="182"/>
    </location>
</feature>
<feature type="domain" description="SMP 1" evidence="2">
    <location>
        <begin position="58"/>
        <end position="115"/>
    </location>
</feature>
<feature type="domain" description="SMP 2" evidence="2">
    <location>
        <begin position="123"/>
        <end position="181"/>
    </location>
</feature>
<feature type="region of interest" description="Disordered" evidence="3">
    <location>
        <begin position="1"/>
        <end position="51"/>
    </location>
</feature>
<feature type="region of interest" description="Disordered" evidence="3">
    <location>
        <begin position="145"/>
        <end position="182"/>
    </location>
</feature>
<feature type="short sequence motif" description="Nuclear localization signal (NLS)" evidence="1">
    <location>
        <begin position="7"/>
        <end position="11"/>
    </location>
</feature>
<feature type="compositionally biased region" description="Basic and acidic residues" evidence="3">
    <location>
        <begin position="10"/>
        <end position="21"/>
    </location>
</feature>
<proteinExistence type="inferred from homology"/>
<dbReference type="EMBL" id="AC006550">
    <property type="protein sequence ID" value="AAD25796.1"/>
    <property type="molecule type" value="Genomic_DNA"/>
</dbReference>
<dbReference type="EMBL" id="CP002684">
    <property type="protein sequence ID" value="AEE27533.1"/>
    <property type="molecule type" value="Genomic_DNA"/>
</dbReference>
<dbReference type="PIR" id="C86162">
    <property type="entry name" value="C86162"/>
</dbReference>
<dbReference type="RefSeq" id="NP_171811.1">
    <property type="nucleotide sequence ID" value="NM_100194.2"/>
</dbReference>
<dbReference type="FunCoup" id="Q9SA57">
    <property type="interactions" value="2"/>
</dbReference>
<dbReference type="STRING" id="3702.Q9SA57"/>
<dbReference type="GlyGen" id="Q9SA57">
    <property type="glycosylation" value="1 site"/>
</dbReference>
<dbReference type="PaxDb" id="3702-AT1G03120.1"/>
<dbReference type="ProteomicsDB" id="230281"/>
<dbReference type="EnsemblPlants" id="AT1G03120.1">
    <property type="protein sequence ID" value="AT1G03120.1"/>
    <property type="gene ID" value="AT1G03120"/>
</dbReference>
<dbReference type="GeneID" id="839571"/>
<dbReference type="Gramene" id="AT1G03120.1">
    <property type="protein sequence ID" value="AT1G03120.1"/>
    <property type="gene ID" value="AT1G03120"/>
</dbReference>
<dbReference type="KEGG" id="ath:AT1G03120"/>
<dbReference type="Araport" id="AT1G03120"/>
<dbReference type="TAIR" id="AT1G03120">
    <property type="gene designation" value="RAB28"/>
</dbReference>
<dbReference type="eggNOG" id="ENOG502QPSX">
    <property type="taxonomic scope" value="Eukaryota"/>
</dbReference>
<dbReference type="HOGENOM" id="CLU_075678_1_0_1"/>
<dbReference type="InParanoid" id="Q9SA57"/>
<dbReference type="OMA" id="MNQRQAI"/>
<dbReference type="PhylomeDB" id="Q9SA57"/>
<dbReference type="PRO" id="PR:Q9SA57"/>
<dbReference type="Proteomes" id="UP000006548">
    <property type="component" value="Chromosome 1"/>
</dbReference>
<dbReference type="ExpressionAtlas" id="Q9SA57">
    <property type="expression patterns" value="baseline and differential"/>
</dbReference>
<dbReference type="GO" id="GO:0005829">
    <property type="term" value="C:cytosol"/>
    <property type="evidence" value="ECO:0007005"/>
    <property type="project" value="TAIR"/>
</dbReference>
<dbReference type="GO" id="GO:0005730">
    <property type="term" value="C:nucleolus"/>
    <property type="evidence" value="ECO:0000314"/>
    <property type="project" value="TAIR"/>
</dbReference>
<dbReference type="GO" id="GO:0005634">
    <property type="term" value="C:nucleus"/>
    <property type="evidence" value="ECO:0000314"/>
    <property type="project" value="UniProtKB"/>
</dbReference>
<dbReference type="GO" id="GO:0006873">
    <property type="term" value="P:intracellular monoatomic ion homeostasis"/>
    <property type="evidence" value="ECO:0000315"/>
    <property type="project" value="TAIR"/>
</dbReference>
<dbReference type="GO" id="GO:0010226">
    <property type="term" value="P:response to lithium ion"/>
    <property type="evidence" value="ECO:0000315"/>
    <property type="project" value="TAIR"/>
</dbReference>
<dbReference type="GO" id="GO:0009845">
    <property type="term" value="P:seed germination"/>
    <property type="evidence" value="ECO:0000315"/>
    <property type="project" value="TAIR"/>
</dbReference>
<dbReference type="InterPro" id="IPR042971">
    <property type="entry name" value="LEA_SMP"/>
</dbReference>
<dbReference type="InterPro" id="IPR007011">
    <property type="entry name" value="LEA_SMP_dom"/>
</dbReference>
<dbReference type="PANTHER" id="PTHR31174:SF31">
    <property type="entry name" value="LATE EMBRYOGENESIS ABUNDANT PROTEIN 3"/>
    <property type="match status" value="1"/>
</dbReference>
<dbReference type="PANTHER" id="PTHR31174">
    <property type="entry name" value="SEED MATURATION FAMILY PROTEIN"/>
    <property type="match status" value="1"/>
</dbReference>
<dbReference type="Pfam" id="PF04927">
    <property type="entry name" value="SMP"/>
    <property type="match status" value="2"/>
</dbReference>
<gene>
    <name evidence="7" type="ordered locus">At1g03120</name>
    <name evidence="8" type="ORF">F10O3.5</name>
</gene>
<keyword id="KW-0963">Cytoplasm</keyword>
<keyword id="KW-0539">Nucleus</keyword>
<keyword id="KW-1185">Reference proteome</keyword>
<keyword id="KW-0677">Repeat</keyword>
<name>LEA3_ARATH</name>
<accession>Q9SA57</accession>
<reference key="1">
    <citation type="journal article" date="2000" name="Nature">
        <title>Sequence and analysis of chromosome 1 of the plant Arabidopsis thaliana.</title>
        <authorList>
            <person name="Theologis A."/>
            <person name="Ecker J.R."/>
            <person name="Palm C.J."/>
            <person name="Federspiel N.A."/>
            <person name="Kaul S."/>
            <person name="White O."/>
            <person name="Alonso J."/>
            <person name="Altafi H."/>
            <person name="Araujo R."/>
            <person name="Bowman C.L."/>
            <person name="Brooks S.Y."/>
            <person name="Buehler E."/>
            <person name="Chan A."/>
            <person name="Chao Q."/>
            <person name="Chen H."/>
            <person name="Cheuk R.F."/>
            <person name="Chin C.W."/>
            <person name="Chung M.K."/>
            <person name="Conn L."/>
            <person name="Conway A.B."/>
            <person name="Conway A.R."/>
            <person name="Creasy T.H."/>
            <person name="Dewar K."/>
            <person name="Dunn P."/>
            <person name="Etgu P."/>
            <person name="Feldblyum T.V."/>
            <person name="Feng J.-D."/>
            <person name="Fong B."/>
            <person name="Fujii C.Y."/>
            <person name="Gill J.E."/>
            <person name="Goldsmith A.D."/>
            <person name="Haas B."/>
            <person name="Hansen N.F."/>
            <person name="Hughes B."/>
            <person name="Huizar L."/>
            <person name="Hunter J.L."/>
            <person name="Jenkins J."/>
            <person name="Johnson-Hopson C."/>
            <person name="Khan S."/>
            <person name="Khaykin E."/>
            <person name="Kim C.J."/>
            <person name="Koo H.L."/>
            <person name="Kremenetskaia I."/>
            <person name="Kurtz D.B."/>
            <person name="Kwan A."/>
            <person name="Lam B."/>
            <person name="Langin-Hooper S."/>
            <person name="Lee A."/>
            <person name="Lee J.M."/>
            <person name="Lenz C.A."/>
            <person name="Li J.H."/>
            <person name="Li Y.-P."/>
            <person name="Lin X."/>
            <person name="Liu S.X."/>
            <person name="Liu Z.A."/>
            <person name="Luros J.S."/>
            <person name="Maiti R."/>
            <person name="Marziali A."/>
            <person name="Militscher J."/>
            <person name="Miranda M."/>
            <person name="Nguyen M."/>
            <person name="Nierman W.C."/>
            <person name="Osborne B.I."/>
            <person name="Pai G."/>
            <person name="Peterson J."/>
            <person name="Pham P.K."/>
            <person name="Rizzo M."/>
            <person name="Rooney T."/>
            <person name="Rowley D."/>
            <person name="Sakano H."/>
            <person name="Salzberg S.L."/>
            <person name="Schwartz J.R."/>
            <person name="Shinn P."/>
            <person name="Southwick A.M."/>
            <person name="Sun H."/>
            <person name="Tallon L.J."/>
            <person name="Tambunga G."/>
            <person name="Toriumi M.J."/>
            <person name="Town C.D."/>
            <person name="Utterback T."/>
            <person name="Van Aken S."/>
            <person name="Vaysberg M."/>
            <person name="Vysotskaia V.S."/>
            <person name="Walker M."/>
            <person name="Wu D."/>
            <person name="Yu G."/>
            <person name="Fraser C.M."/>
            <person name="Venter J.C."/>
            <person name="Davis R.W."/>
        </authorList>
    </citation>
    <scope>NUCLEOTIDE SEQUENCE [LARGE SCALE GENOMIC DNA]</scope>
    <source>
        <strain>cv. Columbia</strain>
    </source>
</reference>
<reference key="2">
    <citation type="journal article" date="2017" name="Plant J.">
        <title>Araport11: a complete reannotation of the Arabidopsis thaliana reference genome.</title>
        <authorList>
            <person name="Cheng C.Y."/>
            <person name="Krishnakumar V."/>
            <person name="Chan A.P."/>
            <person name="Thibaud-Nissen F."/>
            <person name="Schobel S."/>
            <person name="Town C.D."/>
        </authorList>
    </citation>
    <scope>GENOME REANNOTATION</scope>
    <source>
        <strain>cv. Columbia</strain>
    </source>
</reference>
<reference key="3">
    <citation type="journal article" date="2008" name="BMC Genomics">
        <title>LEA (late embryogenesis abundant) proteins and their encoding genes in Arabidopsis thaliana.</title>
        <authorList>
            <person name="Hundertmark M."/>
            <person name="Hincha D.K."/>
        </authorList>
    </citation>
    <scope>GENE FAMILY</scope>
    <scope>NOMENCLATURE</scope>
</reference>
<reference key="4">
    <citation type="journal article" date="2014" name="Plant Cell">
        <title>The ubiquitous distribution of late embryogenesis abundant proteins across cell compartments in Arabidopsis offers tailored protection against abiotic stress.</title>
        <authorList>
            <person name="Candat A."/>
            <person name="Paszkiewicz G."/>
            <person name="Neveu M."/>
            <person name="Gautier R."/>
            <person name="Logan D.C."/>
            <person name="Avelange-Macherel M.-H."/>
            <person name="Macherel D."/>
        </authorList>
    </citation>
    <scope>SUBCELLULAR LOCATION</scope>
    <scope>GENE FAMILY</scope>
    <scope>NOMENCLATURE</scope>
</reference>